<accession>Q8Z989</accession>
<accession>Q7CBN8</accession>
<proteinExistence type="evidence at protein level"/>
<gene>
    <name type="primary">gmhB</name>
    <name type="ordered locus">STY0275</name>
    <name type="ordered locus">t0251</name>
</gene>
<protein>
    <recommendedName>
        <fullName>D-glycero-beta-D-manno-heptose-1,7-bisphosphate 7-phosphatase</fullName>
        <ecNumber evidence="3">3.1.3.82</ecNumber>
    </recommendedName>
    <alternativeName>
        <fullName>D,D-heptose 1,7-bisphosphate phosphatase</fullName>
        <shortName>HBP phosphatase</shortName>
    </alternativeName>
</protein>
<name>GMHBB_SALTI</name>
<organism>
    <name type="scientific">Salmonella typhi</name>
    <dbReference type="NCBI Taxonomy" id="90370"/>
    <lineage>
        <taxon>Bacteria</taxon>
        <taxon>Pseudomonadati</taxon>
        <taxon>Pseudomonadota</taxon>
        <taxon>Gammaproteobacteria</taxon>
        <taxon>Enterobacterales</taxon>
        <taxon>Enterobacteriaceae</taxon>
        <taxon>Salmonella</taxon>
    </lineage>
</organism>
<keyword id="KW-0119">Carbohydrate metabolism</keyword>
<keyword id="KW-0963">Cytoplasm</keyword>
<keyword id="KW-0378">Hydrolase</keyword>
<keyword id="KW-0448">Lipopolysaccharide biosynthesis</keyword>
<keyword id="KW-0460">Magnesium</keyword>
<keyword id="KW-0479">Metal-binding</keyword>
<keyword id="KW-0862">Zinc</keyword>
<evidence type="ECO:0000250" key="1"/>
<evidence type="ECO:0000250" key="2">
    <source>
        <dbReference type="UniProtKB" id="Q7WG29"/>
    </source>
</evidence>
<evidence type="ECO:0000269" key="3">
    <source>
    </source>
</evidence>
<evidence type="ECO:0000305" key="4"/>
<feature type="chain" id="PRO_0000209404" description="D-glycero-beta-D-manno-heptose-1,7-bisphosphate 7-phosphatase">
    <location>
        <begin position="1"/>
        <end position="188"/>
    </location>
</feature>
<feature type="active site" description="Nucleophile" evidence="1">
    <location>
        <position position="11"/>
    </location>
</feature>
<feature type="active site" description="Proton donor" evidence="1">
    <location>
        <position position="13"/>
    </location>
</feature>
<feature type="binding site" evidence="1">
    <location>
        <begin position="11"/>
        <end position="13"/>
    </location>
    <ligand>
        <name>substrate</name>
    </ligand>
</feature>
<feature type="binding site" evidence="1">
    <location>
        <position position="11"/>
    </location>
    <ligand>
        <name>Mg(2+)</name>
        <dbReference type="ChEBI" id="CHEBI:18420"/>
    </ligand>
</feature>
<feature type="binding site" evidence="1">
    <location>
        <position position="13"/>
    </location>
    <ligand>
        <name>Mg(2+)</name>
        <dbReference type="ChEBI" id="CHEBI:18420"/>
    </ligand>
</feature>
<feature type="binding site" evidence="1">
    <location>
        <begin position="19"/>
        <end position="22"/>
    </location>
    <ligand>
        <name>substrate</name>
    </ligand>
</feature>
<feature type="binding site" evidence="1">
    <location>
        <begin position="53"/>
        <end position="56"/>
    </location>
    <ligand>
        <name>substrate</name>
    </ligand>
</feature>
<feature type="binding site" evidence="2">
    <location>
        <position position="92"/>
    </location>
    <ligand>
        <name>Zn(2+)</name>
        <dbReference type="ChEBI" id="CHEBI:29105"/>
    </ligand>
</feature>
<feature type="binding site" evidence="2">
    <location>
        <position position="94"/>
    </location>
    <ligand>
        <name>Zn(2+)</name>
        <dbReference type="ChEBI" id="CHEBI:29105"/>
    </ligand>
</feature>
<feature type="binding site" evidence="2">
    <location>
        <position position="107"/>
    </location>
    <ligand>
        <name>Zn(2+)</name>
        <dbReference type="ChEBI" id="CHEBI:29105"/>
    </ligand>
</feature>
<feature type="binding site" evidence="2">
    <location>
        <position position="109"/>
    </location>
    <ligand>
        <name>Zn(2+)</name>
        <dbReference type="ChEBI" id="CHEBI:29105"/>
    </ligand>
</feature>
<feature type="binding site" evidence="1">
    <location>
        <begin position="110"/>
        <end position="111"/>
    </location>
    <ligand>
        <name>substrate</name>
    </ligand>
</feature>
<feature type="binding site" evidence="1">
    <location>
        <position position="136"/>
    </location>
    <ligand>
        <name>Mg(2+)</name>
        <dbReference type="ChEBI" id="CHEBI:18420"/>
    </ligand>
</feature>
<feature type="binding site" evidence="1">
    <location>
        <position position="137"/>
    </location>
    <ligand>
        <name>Mg(2+)</name>
        <dbReference type="ChEBI" id="CHEBI:18420"/>
    </ligand>
</feature>
<feature type="binding site" evidence="1">
    <location>
        <position position="137"/>
    </location>
    <ligand>
        <name>substrate</name>
    </ligand>
</feature>
<feature type="site" description="Stabilizes the phosphoryl group" evidence="1">
    <location>
        <position position="53"/>
    </location>
</feature>
<feature type="site" description="Contributes to substrate recognition" evidence="1">
    <location>
        <position position="110"/>
    </location>
</feature>
<feature type="site" description="Stabilizes the phosphoryl group" evidence="1">
    <location>
        <position position="111"/>
    </location>
</feature>
<sequence length="188" mass="20860">MAKSVPAIFLDRDGTINVDHGYVHEIDAFEFIDGVIDAMRELKKMGYALVVVTNQSGIARGKFTEAQFETLTEWMDWSLADRDVDLDGIYYCPHHPQGSIEEFRQVCDCRKPHPGMLISARDFLHIDMAASYMVGDKLEDMQAAAAANVGTKVLVRTGKPVTAEAENAADWVLNSLADLPSAIKKQQK</sequence>
<comment type="function">
    <text evidence="3">Converts the D-glycero-beta-D-manno-heptose 1,7-bisphosphate intermediate into D-glycero-beta-D-manno-heptose 1-phosphate by removing the phosphate group at the C-7 position in vitro. Also catalyzes the dephosphorylation of D-glycero-alpha-D-manno-heptose 1,7-bisphosphate and 2-deoxy-D-manno-2-octoulosonate-8-phosphate in vitro.</text>
</comment>
<comment type="catalytic activity">
    <reaction evidence="3">
        <text>D-glycero-beta-D-manno-heptose 1,7-bisphosphate + H2O = D-glycero-beta-D-manno-heptose 1-phosphate + phosphate</text>
        <dbReference type="Rhea" id="RHEA:28518"/>
        <dbReference type="ChEBI" id="CHEBI:15377"/>
        <dbReference type="ChEBI" id="CHEBI:43474"/>
        <dbReference type="ChEBI" id="CHEBI:60208"/>
        <dbReference type="ChEBI" id="CHEBI:61593"/>
        <dbReference type="EC" id="3.1.3.82"/>
    </reaction>
</comment>
<comment type="cofactor">
    <cofactor evidence="3">
        <name>Mg(2+)</name>
        <dbReference type="ChEBI" id="CHEBI:18420"/>
    </cofactor>
</comment>
<comment type="cofactor">
    <cofactor evidence="1">
        <name>Zn(2+)</name>
        <dbReference type="ChEBI" id="CHEBI:29105"/>
    </cofactor>
</comment>
<comment type="pathway">
    <text>Nucleotide-sugar biosynthesis; ADP-L-glycero-beta-D-manno-heptose biosynthesis; ADP-L-glycero-beta-D-manno-heptose from D-glycero-beta-D-manno-heptose 7-phosphate: step 2/4.</text>
</comment>
<comment type="pathway">
    <text>Bacterial outer membrane biogenesis; LPS core biosynthesis.</text>
</comment>
<comment type="subunit">
    <text evidence="1">Monomer.</text>
</comment>
<comment type="subcellular location">
    <subcellularLocation>
        <location evidence="1">Cytoplasm</location>
    </subcellularLocation>
</comment>
<comment type="similarity">
    <text evidence="4">Belongs to the GmhB family.</text>
</comment>
<reference key="1">
    <citation type="journal article" date="2001" name="Nature">
        <title>Complete genome sequence of a multiple drug resistant Salmonella enterica serovar Typhi CT18.</title>
        <authorList>
            <person name="Parkhill J."/>
            <person name="Dougan G."/>
            <person name="James K.D."/>
            <person name="Thomson N.R."/>
            <person name="Pickard D."/>
            <person name="Wain J."/>
            <person name="Churcher C.M."/>
            <person name="Mungall K.L."/>
            <person name="Bentley S.D."/>
            <person name="Holden M.T.G."/>
            <person name="Sebaihia M."/>
            <person name="Baker S."/>
            <person name="Basham D."/>
            <person name="Brooks K."/>
            <person name="Chillingworth T."/>
            <person name="Connerton P."/>
            <person name="Cronin A."/>
            <person name="Davis P."/>
            <person name="Davies R.M."/>
            <person name="Dowd L."/>
            <person name="White N."/>
            <person name="Farrar J."/>
            <person name="Feltwell T."/>
            <person name="Hamlin N."/>
            <person name="Haque A."/>
            <person name="Hien T.T."/>
            <person name="Holroyd S."/>
            <person name="Jagels K."/>
            <person name="Krogh A."/>
            <person name="Larsen T.S."/>
            <person name="Leather S."/>
            <person name="Moule S."/>
            <person name="O'Gaora P."/>
            <person name="Parry C."/>
            <person name="Quail M.A."/>
            <person name="Rutherford K.M."/>
            <person name="Simmonds M."/>
            <person name="Skelton J."/>
            <person name="Stevens K."/>
            <person name="Whitehead S."/>
            <person name="Barrell B.G."/>
        </authorList>
    </citation>
    <scope>NUCLEOTIDE SEQUENCE [LARGE SCALE GENOMIC DNA]</scope>
    <source>
        <strain>CT18</strain>
    </source>
</reference>
<reference key="2">
    <citation type="journal article" date="2003" name="J. Bacteriol.">
        <title>Comparative genomics of Salmonella enterica serovar Typhi strains Ty2 and CT18.</title>
        <authorList>
            <person name="Deng W."/>
            <person name="Liou S.-R."/>
            <person name="Plunkett G. III"/>
            <person name="Mayhew G.F."/>
            <person name="Rose D.J."/>
            <person name="Burland V."/>
            <person name="Kodoyianni V."/>
            <person name="Schwartz D.C."/>
            <person name="Blattner F.R."/>
        </authorList>
    </citation>
    <scope>NUCLEOTIDE SEQUENCE [LARGE SCALE GENOMIC DNA]</scope>
    <source>
        <strain>ATCC 700931 / Ty2</strain>
    </source>
</reference>
<reference key="3">
    <citation type="journal article" date="2015" name="Proc. Natl. Acad. Sci. U.S.A.">
        <title>Panoramic view of a superfamily of phosphatases through substrate profiling.</title>
        <authorList>
            <person name="Huang H."/>
            <person name="Pandya C."/>
            <person name="Liu C."/>
            <person name="Al-Obaidi N.F."/>
            <person name="Wang M."/>
            <person name="Zheng L."/>
            <person name="Toews Keating S."/>
            <person name="Aono M."/>
            <person name="Love J.D."/>
            <person name="Evans B."/>
            <person name="Seidel R.D."/>
            <person name="Hillerich B.S."/>
            <person name="Garforth S.J."/>
            <person name="Almo S.C."/>
            <person name="Mariano P.S."/>
            <person name="Dunaway-Mariano D."/>
            <person name="Allen K.N."/>
            <person name="Farelli J.D."/>
        </authorList>
    </citation>
    <scope>FUNCTION</scope>
    <scope>CATALYTIC ACTIVITY</scope>
    <scope>COFACTOR</scope>
</reference>
<dbReference type="EC" id="3.1.3.82" evidence="3"/>
<dbReference type="EMBL" id="AL513382">
    <property type="protein sequence ID" value="CAD08708.1"/>
    <property type="molecule type" value="Genomic_DNA"/>
</dbReference>
<dbReference type="EMBL" id="AE014613">
    <property type="protein sequence ID" value="AAO67980.1"/>
    <property type="molecule type" value="Genomic_DNA"/>
</dbReference>
<dbReference type="RefSeq" id="NP_454857.1">
    <property type="nucleotide sequence ID" value="NC_003198.1"/>
</dbReference>
<dbReference type="RefSeq" id="WP_001140158.1">
    <property type="nucleotide sequence ID" value="NZ_WSUR01000065.1"/>
</dbReference>
<dbReference type="SMR" id="Q8Z989"/>
<dbReference type="STRING" id="220341.gene:17584306"/>
<dbReference type="KEGG" id="stt:t0251"/>
<dbReference type="KEGG" id="sty:STY0275"/>
<dbReference type="PATRIC" id="fig|220341.7.peg.276"/>
<dbReference type="eggNOG" id="COG0241">
    <property type="taxonomic scope" value="Bacteria"/>
</dbReference>
<dbReference type="HOGENOM" id="CLU_085077_3_0_6"/>
<dbReference type="OMA" id="FMIGDKE"/>
<dbReference type="OrthoDB" id="9781367at2"/>
<dbReference type="UniPathway" id="UPA00356">
    <property type="reaction ID" value="UER00438"/>
</dbReference>
<dbReference type="UniPathway" id="UPA00958"/>
<dbReference type="Proteomes" id="UP000000541">
    <property type="component" value="Chromosome"/>
</dbReference>
<dbReference type="Proteomes" id="UP000002670">
    <property type="component" value="Chromosome"/>
</dbReference>
<dbReference type="GO" id="GO:0005737">
    <property type="term" value="C:cytoplasm"/>
    <property type="evidence" value="ECO:0007669"/>
    <property type="project" value="UniProtKB-SubCell"/>
</dbReference>
<dbReference type="GO" id="GO:0034200">
    <property type="term" value="F:D-glycero-beta-D-manno-heptose 1,7-bisphosphate 7-phosphatase activity"/>
    <property type="evidence" value="ECO:0000250"/>
    <property type="project" value="UniProtKB"/>
</dbReference>
<dbReference type="GO" id="GO:0000287">
    <property type="term" value="F:magnesium ion binding"/>
    <property type="evidence" value="ECO:0000250"/>
    <property type="project" value="UniProtKB"/>
</dbReference>
<dbReference type="GO" id="GO:0008270">
    <property type="term" value="F:zinc ion binding"/>
    <property type="evidence" value="ECO:0000250"/>
    <property type="project" value="UniProtKB"/>
</dbReference>
<dbReference type="GO" id="GO:0097171">
    <property type="term" value="P:ADP-L-glycero-beta-D-manno-heptose biosynthetic process"/>
    <property type="evidence" value="ECO:0007669"/>
    <property type="project" value="UniProtKB-UniPathway"/>
</dbReference>
<dbReference type="GO" id="GO:0009244">
    <property type="term" value="P:lipopolysaccharide core region biosynthetic process"/>
    <property type="evidence" value="ECO:0007669"/>
    <property type="project" value="UniProtKB-UniPathway"/>
</dbReference>
<dbReference type="CDD" id="cd07503">
    <property type="entry name" value="HAD_HisB-N"/>
    <property type="match status" value="1"/>
</dbReference>
<dbReference type="FunFam" id="3.40.50.1000:FF:000037">
    <property type="entry name" value="D,D-heptose 1,7-bisphosphate phosphatase"/>
    <property type="match status" value="1"/>
</dbReference>
<dbReference type="Gene3D" id="3.40.50.1000">
    <property type="entry name" value="HAD superfamily/HAD-like"/>
    <property type="match status" value="1"/>
</dbReference>
<dbReference type="InterPro" id="IPR036412">
    <property type="entry name" value="HAD-like_sf"/>
</dbReference>
<dbReference type="InterPro" id="IPR006549">
    <property type="entry name" value="HAD-SF_hydro_IIIA"/>
</dbReference>
<dbReference type="InterPro" id="IPR023214">
    <property type="entry name" value="HAD_sf"/>
</dbReference>
<dbReference type="InterPro" id="IPR004446">
    <property type="entry name" value="Heptose_bisP_phosphatase"/>
</dbReference>
<dbReference type="InterPro" id="IPR006543">
    <property type="entry name" value="Histidinol-phos"/>
</dbReference>
<dbReference type="NCBIfam" id="TIGR00213">
    <property type="entry name" value="GmhB_yaeD"/>
    <property type="match status" value="1"/>
</dbReference>
<dbReference type="NCBIfam" id="TIGR01662">
    <property type="entry name" value="HAD-SF-IIIA"/>
    <property type="match status" value="1"/>
</dbReference>
<dbReference type="NCBIfam" id="TIGR01656">
    <property type="entry name" value="Histidinol-ppas"/>
    <property type="match status" value="1"/>
</dbReference>
<dbReference type="NCBIfam" id="NF006506">
    <property type="entry name" value="PRK08942.1"/>
    <property type="match status" value="1"/>
</dbReference>
<dbReference type="PANTHER" id="PTHR42891">
    <property type="entry name" value="D-GLYCERO-BETA-D-MANNO-HEPTOSE-1,7-BISPHOSPHATE 7-PHOSPHATASE"/>
    <property type="match status" value="1"/>
</dbReference>
<dbReference type="PANTHER" id="PTHR42891:SF1">
    <property type="entry name" value="D-GLYCERO-BETA-D-MANNO-HEPTOSE-1,7-BISPHOSPHATE 7-PHOSPHATASE"/>
    <property type="match status" value="1"/>
</dbReference>
<dbReference type="Pfam" id="PF13242">
    <property type="entry name" value="Hydrolase_like"/>
    <property type="match status" value="1"/>
</dbReference>
<dbReference type="PIRSF" id="PIRSF004682">
    <property type="entry name" value="GmhB"/>
    <property type="match status" value="1"/>
</dbReference>
<dbReference type="SFLD" id="SFLDG01134">
    <property type="entry name" value="C1.5.5:_Heptose_Bisphosphate_P"/>
    <property type="match status" value="1"/>
</dbReference>
<dbReference type="SFLD" id="SFLDG01129">
    <property type="entry name" value="C1.5:_HAD__Beta-PGM__Phosphata"/>
    <property type="match status" value="1"/>
</dbReference>
<dbReference type="SUPFAM" id="SSF56784">
    <property type="entry name" value="HAD-like"/>
    <property type="match status" value="1"/>
</dbReference>